<reference key="1">
    <citation type="journal article" date="2005" name="PLoS Biol.">
        <title>The genome sequence of Rickettsia felis identifies the first putative conjugative plasmid in an obligate intracellular parasite.</title>
        <authorList>
            <person name="Ogata H."/>
            <person name="Renesto P."/>
            <person name="Audic S."/>
            <person name="Robert C."/>
            <person name="Blanc G."/>
            <person name="Fournier P.-E."/>
            <person name="Parinello H."/>
            <person name="Claverie J.-M."/>
            <person name="Raoult D."/>
        </authorList>
    </citation>
    <scope>NUCLEOTIDE SEQUENCE [LARGE SCALE GENOMIC DNA]</scope>
    <source>
        <strain>ATCC VR-1525 / URRWXCal2</strain>
    </source>
</reference>
<feature type="chain" id="PRO_0000274898" description="Glycine--tRNA ligase beta subunit">
    <location>
        <begin position="1"/>
        <end position="664"/>
    </location>
</feature>
<evidence type="ECO:0000255" key="1">
    <source>
        <dbReference type="HAMAP-Rule" id="MF_00255"/>
    </source>
</evidence>
<keyword id="KW-0030">Aminoacyl-tRNA synthetase</keyword>
<keyword id="KW-0067">ATP-binding</keyword>
<keyword id="KW-0963">Cytoplasm</keyword>
<keyword id="KW-0436">Ligase</keyword>
<keyword id="KW-0547">Nucleotide-binding</keyword>
<keyword id="KW-0648">Protein biosynthesis</keyword>
<proteinExistence type="inferred from homology"/>
<dbReference type="EC" id="6.1.1.14" evidence="1"/>
<dbReference type="EMBL" id="CP000053">
    <property type="protein sequence ID" value="AAY62197.1"/>
    <property type="molecule type" value="Genomic_DNA"/>
</dbReference>
<dbReference type="SMR" id="Q4UJU2"/>
<dbReference type="STRING" id="315456.RF_1346"/>
<dbReference type="KEGG" id="rfe:RF_1346"/>
<dbReference type="eggNOG" id="COG0751">
    <property type="taxonomic scope" value="Bacteria"/>
</dbReference>
<dbReference type="HOGENOM" id="CLU_007220_2_1_5"/>
<dbReference type="OrthoDB" id="9775440at2"/>
<dbReference type="Proteomes" id="UP000008548">
    <property type="component" value="Chromosome"/>
</dbReference>
<dbReference type="GO" id="GO:0005829">
    <property type="term" value="C:cytosol"/>
    <property type="evidence" value="ECO:0007669"/>
    <property type="project" value="TreeGrafter"/>
</dbReference>
<dbReference type="GO" id="GO:0004814">
    <property type="term" value="F:arginine-tRNA ligase activity"/>
    <property type="evidence" value="ECO:0007669"/>
    <property type="project" value="InterPro"/>
</dbReference>
<dbReference type="GO" id="GO:0005524">
    <property type="term" value="F:ATP binding"/>
    <property type="evidence" value="ECO:0007669"/>
    <property type="project" value="UniProtKB-UniRule"/>
</dbReference>
<dbReference type="GO" id="GO:0004820">
    <property type="term" value="F:glycine-tRNA ligase activity"/>
    <property type="evidence" value="ECO:0007669"/>
    <property type="project" value="UniProtKB-UniRule"/>
</dbReference>
<dbReference type="GO" id="GO:0006420">
    <property type="term" value="P:arginyl-tRNA aminoacylation"/>
    <property type="evidence" value="ECO:0007669"/>
    <property type="project" value="InterPro"/>
</dbReference>
<dbReference type="GO" id="GO:0006426">
    <property type="term" value="P:glycyl-tRNA aminoacylation"/>
    <property type="evidence" value="ECO:0007669"/>
    <property type="project" value="UniProtKB-UniRule"/>
</dbReference>
<dbReference type="HAMAP" id="MF_00255">
    <property type="entry name" value="Gly_tRNA_synth_beta"/>
    <property type="match status" value="1"/>
</dbReference>
<dbReference type="InterPro" id="IPR008909">
    <property type="entry name" value="DALR_anticod-bd"/>
</dbReference>
<dbReference type="InterPro" id="IPR015944">
    <property type="entry name" value="Gly-tRNA-synth_bsu"/>
</dbReference>
<dbReference type="InterPro" id="IPR006194">
    <property type="entry name" value="Gly-tRNA-synth_heterodimer"/>
</dbReference>
<dbReference type="NCBIfam" id="TIGR00211">
    <property type="entry name" value="glyS"/>
    <property type="match status" value="1"/>
</dbReference>
<dbReference type="PANTHER" id="PTHR30075:SF2">
    <property type="entry name" value="GLYCINE--TRNA LIGASE, CHLOROPLASTIC_MITOCHONDRIAL 2"/>
    <property type="match status" value="1"/>
</dbReference>
<dbReference type="PANTHER" id="PTHR30075">
    <property type="entry name" value="GLYCYL-TRNA SYNTHETASE"/>
    <property type="match status" value="1"/>
</dbReference>
<dbReference type="Pfam" id="PF05746">
    <property type="entry name" value="DALR_1"/>
    <property type="match status" value="1"/>
</dbReference>
<dbReference type="Pfam" id="PF02092">
    <property type="entry name" value="tRNA_synt_2f"/>
    <property type="match status" value="1"/>
</dbReference>
<dbReference type="PRINTS" id="PR01045">
    <property type="entry name" value="TRNASYNTHGB"/>
</dbReference>
<dbReference type="SUPFAM" id="SSF109604">
    <property type="entry name" value="HD-domain/PDEase-like"/>
    <property type="match status" value="1"/>
</dbReference>
<dbReference type="PROSITE" id="PS50861">
    <property type="entry name" value="AA_TRNA_LIGASE_II_GLYAB"/>
    <property type="match status" value="1"/>
</dbReference>
<gene>
    <name evidence="1" type="primary">glyS</name>
    <name type="ordered locus">RF_1346</name>
</gene>
<sequence length="664" mass="75293">MSELLLELFSEEIPAFMQKNAEEGYLNIFTKIFEENEIFAKVQAFAGPRRITLYATHLPKVTLPKETEIKGPSIDAPEAAINGFCKAHNVSKLELSTKLINNQLYYFFVKKTEEREIKEILPEIIIEAINKYSWAKSMFWGDYKIKWIRPLRNILCIFDGEVLPLQFGHLTANNIAYGHRYRLTDNKKLEVTDFEDYKNKLSENHVILERTKREEIIKTGLLELANSRNLNIKEDNRLIEEVAGLSEFPVVLLGKIPQKFLELPKEVLISSMRTHQKYFCLFDKEGNFAQYFLFVSNGRFANAELVIKGNEKVLSARLSDALYFYKQDIAKTLESRLGKLEAVTFHAKLGNLREKVERVAKICSYTALDNTDLITAAKLCKSDLVSEMVGEFPDLQGIMGYYYAKHEGLGEEVAAAIKDHYKPQGLSDNVPGGNAALLALADKVDSLVGLMIAGEAPTGSGDPYALRRQALGIIRIILENKLELNLNDLIIFSLKLYGNSADKDLITSFFEERAKFYFKNDYDIALINAALDLNLVDTKFKLDSLKEFLVEDAGKQLLNAYKRASNIIDGQKITGLVDASLFSTQPEKELFEVMQKISPQVTSSISDKDYNKALNLLSFLLTPITSFFDNVLVNDPDPKIAENRLSLLHNICELFDKVAKFCRL</sequence>
<name>SYGB_RICFE</name>
<comment type="catalytic activity">
    <reaction evidence="1">
        <text>tRNA(Gly) + glycine + ATP = glycyl-tRNA(Gly) + AMP + diphosphate</text>
        <dbReference type="Rhea" id="RHEA:16013"/>
        <dbReference type="Rhea" id="RHEA-COMP:9664"/>
        <dbReference type="Rhea" id="RHEA-COMP:9683"/>
        <dbReference type="ChEBI" id="CHEBI:30616"/>
        <dbReference type="ChEBI" id="CHEBI:33019"/>
        <dbReference type="ChEBI" id="CHEBI:57305"/>
        <dbReference type="ChEBI" id="CHEBI:78442"/>
        <dbReference type="ChEBI" id="CHEBI:78522"/>
        <dbReference type="ChEBI" id="CHEBI:456215"/>
        <dbReference type="EC" id="6.1.1.14"/>
    </reaction>
</comment>
<comment type="subunit">
    <text evidence="1">Tetramer of two alpha and two beta subunits.</text>
</comment>
<comment type="subcellular location">
    <subcellularLocation>
        <location evidence="1">Cytoplasm</location>
    </subcellularLocation>
</comment>
<comment type="similarity">
    <text evidence="1">Belongs to the class-II aminoacyl-tRNA synthetase family.</text>
</comment>
<accession>Q4UJU2</accession>
<protein>
    <recommendedName>
        <fullName evidence="1">Glycine--tRNA ligase beta subunit</fullName>
        <ecNumber evidence="1">6.1.1.14</ecNumber>
    </recommendedName>
    <alternativeName>
        <fullName evidence="1">Glycyl-tRNA synthetase beta subunit</fullName>
        <shortName evidence="1">GlyRS</shortName>
    </alternativeName>
</protein>
<organism>
    <name type="scientific">Rickettsia felis (strain ATCC VR-1525 / URRWXCal2)</name>
    <name type="common">Rickettsia azadi</name>
    <dbReference type="NCBI Taxonomy" id="315456"/>
    <lineage>
        <taxon>Bacteria</taxon>
        <taxon>Pseudomonadati</taxon>
        <taxon>Pseudomonadota</taxon>
        <taxon>Alphaproteobacteria</taxon>
        <taxon>Rickettsiales</taxon>
        <taxon>Rickettsiaceae</taxon>
        <taxon>Rickettsieae</taxon>
        <taxon>Rickettsia</taxon>
        <taxon>spotted fever group</taxon>
    </lineage>
</organism>